<reference key="1">
    <citation type="journal article" date="2003" name="Nature">
        <title>The genome of a motile marine Synechococcus.</title>
        <authorList>
            <person name="Palenik B."/>
            <person name="Brahamsha B."/>
            <person name="Larimer F.W."/>
            <person name="Land M.L."/>
            <person name="Hauser L."/>
            <person name="Chain P."/>
            <person name="Lamerdin J.E."/>
            <person name="Regala W."/>
            <person name="Allen E.E."/>
            <person name="McCarren J."/>
            <person name="Paulsen I.T."/>
            <person name="Dufresne A."/>
            <person name="Partensky F."/>
            <person name="Webb E.A."/>
            <person name="Waterbury J."/>
        </authorList>
    </citation>
    <scope>NUCLEOTIDE SEQUENCE [LARGE SCALE GENOMIC DNA]</scope>
    <source>
        <strain>WH8102</strain>
    </source>
</reference>
<proteinExistence type="inferred from homology"/>
<gene>
    <name evidence="1" type="primary">psbU</name>
    <name type="ordered locus">SYNW2191</name>
</gene>
<comment type="function">
    <text evidence="1">One of the extrinsic, lumenal subunits of photosystem II (PSII). PSII is a light-driven water plastoquinone oxidoreductase, using light energy to abstract electrons from H(2)O, generating a proton gradient subsequently used for ATP formation. The extrinsic proteins stabilize the structure of photosystem II oxygen-evolving complex (OEC), the ion environment of oxygen evolution and protect the OEC against heat-induced inactivation.</text>
</comment>
<comment type="subunit">
    <text evidence="1">PSII is composed of 1 copy each of membrane proteins PsbA, PsbB, PsbC, PsbD, PsbE, PsbF, PsbH, PsbI, PsbJ, PsbK, PsbL, PsbM, PsbT, PsbX, PsbY, Psb30/Ycf12, peripheral proteins PsbO, CyanoQ (PsbQ), PsbU, PsbV and a large number of cofactors. It forms dimeric complexes.</text>
</comment>
<comment type="subcellular location">
    <subcellularLocation>
        <location evidence="1">Cellular thylakoid membrane</location>
        <topology evidence="1">Peripheral membrane protein</topology>
        <orientation evidence="1">Lumenal side</orientation>
    </subcellularLocation>
</comment>
<comment type="similarity">
    <text evidence="1">Belongs to the PsbU family.</text>
</comment>
<sequence length="135" mass="15012">MKRLLSWLTGALLMAGLLAGLILPGSVHADEDLVGKYSGNEIRNIADDKIAAREGKVDLNNSSVRRFQQFPGMYPTMAGKIVLGGPYNDVDEVLNLDLSERQIELFNKYKENFTVTPPEIALNEGDDRINDGQYR</sequence>
<dbReference type="EMBL" id="BX569694">
    <property type="protein sequence ID" value="CAE08706.1"/>
    <property type="molecule type" value="Genomic_DNA"/>
</dbReference>
<dbReference type="RefSeq" id="WP_011129046.1">
    <property type="nucleotide sequence ID" value="NC_005070.1"/>
</dbReference>
<dbReference type="SMR" id="Q7U480"/>
<dbReference type="STRING" id="84588.SYNW2191"/>
<dbReference type="KEGG" id="syw:SYNW2191"/>
<dbReference type="eggNOG" id="COG1555">
    <property type="taxonomic scope" value="Bacteria"/>
</dbReference>
<dbReference type="HOGENOM" id="CLU_141240_1_0_3"/>
<dbReference type="BioCyc" id="MetaCyc:TX72_RS11040-MONOMER"/>
<dbReference type="Proteomes" id="UP000001422">
    <property type="component" value="Chromosome"/>
</dbReference>
<dbReference type="GO" id="GO:0019898">
    <property type="term" value="C:extrinsic component of membrane"/>
    <property type="evidence" value="ECO:0007669"/>
    <property type="project" value="InterPro"/>
</dbReference>
<dbReference type="GO" id="GO:0009654">
    <property type="term" value="C:photosystem II oxygen evolving complex"/>
    <property type="evidence" value="ECO:0007669"/>
    <property type="project" value="InterPro"/>
</dbReference>
<dbReference type="GO" id="GO:0031676">
    <property type="term" value="C:plasma membrane-derived thylakoid membrane"/>
    <property type="evidence" value="ECO:0007669"/>
    <property type="project" value="UniProtKB-SubCell"/>
</dbReference>
<dbReference type="GO" id="GO:0015979">
    <property type="term" value="P:photosynthesis"/>
    <property type="evidence" value="ECO:0007669"/>
    <property type="project" value="UniProtKB-UniRule"/>
</dbReference>
<dbReference type="GO" id="GO:0042549">
    <property type="term" value="P:photosystem II stabilization"/>
    <property type="evidence" value="ECO:0007669"/>
    <property type="project" value="InterPro"/>
</dbReference>
<dbReference type="Gene3D" id="1.10.150.320">
    <property type="entry name" value="Photosystem II 12 kDa extrinsic protein"/>
    <property type="match status" value="1"/>
</dbReference>
<dbReference type="HAMAP" id="MF_00589">
    <property type="entry name" value="PSII_PsbU"/>
    <property type="match status" value="1"/>
</dbReference>
<dbReference type="InterPro" id="IPR010527">
    <property type="entry name" value="PSII_PsbU"/>
</dbReference>
<dbReference type="NCBIfam" id="NF002708">
    <property type="entry name" value="PRK02515.1"/>
    <property type="match status" value="1"/>
</dbReference>
<dbReference type="Pfam" id="PF06514">
    <property type="entry name" value="PsbU"/>
    <property type="match status" value="1"/>
</dbReference>
<dbReference type="SUPFAM" id="SSF81585">
    <property type="entry name" value="PsbU/PolX domain-like"/>
    <property type="match status" value="1"/>
</dbReference>
<accession>Q7U480</accession>
<organism>
    <name type="scientific">Parasynechococcus marenigrum (strain WH8102)</name>
    <dbReference type="NCBI Taxonomy" id="84588"/>
    <lineage>
        <taxon>Bacteria</taxon>
        <taxon>Bacillati</taxon>
        <taxon>Cyanobacteriota</taxon>
        <taxon>Cyanophyceae</taxon>
        <taxon>Synechococcales</taxon>
        <taxon>Prochlorococcaceae</taxon>
        <taxon>Parasynechococcus</taxon>
        <taxon>Parasynechococcus marenigrum</taxon>
    </lineage>
</organism>
<protein>
    <recommendedName>
        <fullName evidence="1">Photosystem II extrinsic protein U</fullName>
        <shortName evidence="1">PSII-U</shortName>
        <shortName evidence="1">PsbU</shortName>
    </recommendedName>
    <alternativeName>
        <fullName evidence="1">Photosystem II 12 kDa extrinsic protein</fullName>
        <shortName evidence="1">PS II complex 12 kDa extrinsic protein</shortName>
    </alternativeName>
</protein>
<name>PSBU_PARMW</name>
<keyword id="KW-0249">Electron transport</keyword>
<keyword id="KW-0472">Membrane</keyword>
<keyword id="KW-0602">Photosynthesis</keyword>
<keyword id="KW-0604">Photosystem II</keyword>
<keyword id="KW-0732">Signal</keyword>
<keyword id="KW-0793">Thylakoid</keyword>
<keyword id="KW-0813">Transport</keyword>
<evidence type="ECO:0000255" key="1">
    <source>
        <dbReference type="HAMAP-Rule" id="MF_00589"/>
    </source>
</evidence>
<feature type="signal peptide" evidence="1">
    <location>
        <begin position="1"/>
        <end position="29"/>
    </location>
</feature>
<feature type="chain" id="PRO_0000029606" description="Photosystem II extrinsic protein U">
    <location>
        <begin position="30"/>
        <end position="135"/>
    </location>
</feature>